<proteinExistence type="inferred from homology"/>
<comment type="function">
    <text evidence="1">Positively regulates the expression of the exporter LysE.</text>
</comment>
<comment type="similarity">
    <text evidence="3">Belongs to the LysR transcriptional regulatory family.</text>
</comment>
<gene>
    <name type="primary">lysG</name>
    <name type="ordered locus">CE1358</name>
</gene>
<dbReference type="EMBL" id="AB083133">
    <property type="protein sequence ID" value="BAB88826.1"/>
    <property type="molecule type" value="Genomic_DNA"/>
</dbReference>
<dbReference type="EMBL" id="BA000035">
    <property type="protein sequence ID" value="BAC18168.1"/>
    <property type="molecule type" value="Genomic_DNA"/>
</dbReference>
<dbReference type="RefSeq" id="WP_006769322.1">
    <property type="nucleotide sequence ID" value="NC_004369.1"/>
</dbReference>
<dbReference type="SMR" id="Q8RQM5"/>
<dbReference type="STRING" id="196164.gene:10741767"/>
<dbReference type="KEGG" id="cef:CE1358"/>
<dbReference type="eggNOG" id="COG0583">
    <property type="taxonomic scope" value="Bacteria"/>
</dbReference>
<dbReference type="HOGENOM" id="CLU_063829_0_1_11"/>
<dbReference type="OrthoDB" id="3252676at2"/>
<dbReference type="Proteomes" id="UP000001409">
    <property type="component" value="Chromosome"/>
</dbReference>
<dbReference type="GO" id="GO:0003677">
    <property type="term" value="F:DNA binding"/>
    <property type="evidence" value="ECO:0007669"/>
    <property type="project" value="UniProtKB-KW"/>
</dbReference>
<dbReference type="GO" id="GO:0003700">
    <property type="term" value="F:DNA-binding transcription factor activity"/>
    <property type="evidence" value="ECO:0007669"/>
    <property type="project" value="InterPro"/>
</dbReference>
<dbReference type="Gene3D" id="3.40.190.290">
    <property type="match status" value="1"/>
</dbReference>
<dbReference type="Gene3D" id="1.10.10.10">
    <property type="entry name" value="Winged helix-like DNA-binding domain superfamily/Winged helix DNA-binding domain"/>
    <property type="match status" value="1"/>
</dbReference>
<dbReference type="InterPro" id="IPR017685">
    <property type="entry name" value="ArgP"/>
</dbReference>
<dbReference type="InterPro" id="IPR050176">
    <property type="entry name" value="LTTR"/>
</dbReference>
<dbReference type="InterPro" id="IPR005119">
    <property type="entry name" value="LysR_subst-bd"/>
</dbReference>
<dbReference type="InterPro" id="IPR000847">
    <property type="entry name" value="Tscrpt_reg_HTH_LysR"/>
</dbReference>
<dbReference type="InterPro" id="IPR036388">
    <property type="entry name" value="WH-like_DNA-bd_sf"/>
</dbReference>
<dbReference type="InterPro" id="IPR036390">
    <property type="entry name" value="WH_DNA-bd_sf"/>
</dbReference>
<dbReference type="NCBIfam" id="TIGR03298">
    <property type="entry name" value="argP"/>
    <property type="match status" value="1"/>
</dbReference>
<dbReference type="NCBIfam" id="NF002964">
    <property type="entry name" value="PRK03635.1"/>
    <property type="match status" value="1"/>
</dbReference>
<dbReference type="PANTHER" id="PTHR30579:SF2">
    <property type="entry name" value="HTH-TYPE TRANSCRIPTIONAL REGULATOR ARGP"/>
    <property type="match status" value="1"/>
</dbReference>
<dbReference type="PANTHER" id="PTHR30579">
    <property type="entry name" value="TRANSCRIPTIONAL REGULATOR"/>
    <property type="match status" value="1"/>
</dbReference>
<dbReference type="Pfam" id="PF00126">
    <property type="entry name" value="HTH_1"/>
    <property type="match status" value="1"/>
</dbReference>
<dbReference type="Pfam" id="PF03466">
    <property type="entry name" value="LysR_substrate"/>
    <property type="match status" value="1"/>
</dbReference>
<dbReference type="SUPFAM" id="SSF53850">
    <property type="entry name" value="Periplasmic binding protein-like II"/>
    <property type="match status" value="1"/>
</dbReference>
<dbReference type="SUPFAM" id="SSF46785">
    <property type="entry name" value="Winged helix' DNA-binding domain"/>
    <property type="match status" value="1"/>
</dbReference>
<dbReference type="PROSITE" id="PS50931">
    <property type="entry name" value="HTH_LYSR"/>
    <property type="match status" value="1"/>
</dbReference>
<accession>Q8RQM5</accession>
<sequence>MNPIHLDTLLTIIDEGSFENASLALSISPSAVSQRIKALEKSVGRVLVSRTQPAVATEAGEVLVQAARKMALLQAETREQLAERLDEIPLTVAINADSLSTWFPPVFAEVAHWGAVTLTLRVEDEAHTLSLLRRGSVLGAVTREADPVAGCEVLRLGVMRHLPVATPELRARYTVDGQPDWVRMPVLRFGPNDVLQDRDLEGRVDGAVARRRVSVVPSAEGFGEAVRLGLGWGLLPEAQAAPMLAAGDVVQLDEKVVDTPLYWQRWRLESRLLARLTDAVVDAARAGLRT</sequence>
<feature type="chain" id="PRO_0000105667" description="Lysine export transcriptional regulatory protein LysG">
    <location>
        <begin position="1"/>
        <end position="290"/>
    </location>
</feature>
<feature type="domain" description="HTH lysR-type" evidence="2">
    <location>
        <begin position="1"/>
        <end position="57"/>
    </location>
</feature>
<feature type="DNA-binding region" description="H-T-H motif" evidence="2">
    <location>
        <begin position="18"/>
        <end position="37"/>
    </location>
</feature>
<protein>
    <recommendedName>
        <fullName evidence="1">Lysine export transcriptional regulatory protein LysG</fullName>
    </recommendedName>
</protein>
<organism>
    <name type="scientific">Corynebacterium efficiens (strain DSM 44549 / YS-314 / AJ 12310 / JCM 11189 / NBRC 100395)</name>
    <dbReference type="NCBI Taxonomy" id="196164"/>
    <lineage>
        <taxon>Bacteria</taxon>
        <taxon>Bacillati</taxon>
        <taxon>Actinomycetota</taxon>
        <taxon>Actinomycetes</taxon>
        <taxon>Mycobacteriales</taxon>
        <taxon>Corynebacteriaceae</taxon>
        <taxon>Corynebacterium</taxon>
    </lineage>
</organism>
<name>LYSG_COREF</name>
<reference key="1">
    <citation type="submission" date="2002-04" db="EMBL/GenBank/DDBJ databases">
        <title>lysG, lysE of Corynebacterium efficiens.</title>
        <authorList>
            <person name="Itaya H."/>
            <person name="Kimura E."/>
            <person name="Kawahara Y."/>
            <person name="Sugimoto S."/>
        </authorList>
    </citation>
    <scope>NUCLEOTIDE SEQUENCE [GENOMIC DNA]</scope>
    <source>
        <strain>DSM 44549 / YS-314 / AJ 12310 / JCM 11189 / NBRC 100395</strain>
    </source>
</reference>
<reference key="2">
    <citation type="journal article" date="2003" name="Genome Res.">
        <title>Comparative complete genome sequence analysis of the amino acid replacements responsible for the thermostability of Corynebacterium efficiens.</title>
        <authorList>
            <person name="Nishio Y."/>
            <person name="Nakamura Y."/>
            <person name="Kawarabayasi Y."/>
            <person name="Usuda Y."/>
            <person name="Kimura E."/>
            <person name="Sugimoto S."/>
            <person name="Matsui K."/>
            <person name="Yamagishi A."/>
            <person name="Kikuchi H."/>
            <person name="Ikeo K."/>
            <person name="Gojobori T."/>
        </authorList>
    </citation>
    <scope>NUCLEOTIDE SEQUENCE [LARGE SCALE GENOMIC DNA]</scope>
    <source>
        <strain>DSM 44549 / YS-314 / AJ 12310 / JCM 11189 / NBRC 100395</strain>
    </source>
</reference>
<evidence type="ECO:0000250" key="1">
    <source>
        <dbReference type="UniProtKB" id="P94632"/>
    </source>
</evidence>
<evidence type="ECO:0000255" key="2">
    <source>
        <dbReference type="PROSITE-ProRule" id="PRU00253"/>
    </source>
</evidence>
<evidence type="ECO:0000305" key="3"/>
<keyword id="KW-0010">Activator</keyword>
<keyword id="KW-0238">DNA-binding</keyword>
<keyword id="KW-1185">Reference proteome</keyword>
<keyword id="KW-0804">Transcription</keyword>
<keyword id="KW-0805">Transcription regulation</keyword>